<dbReference type="EC" id="5.4.99.62" evidence="1"/>
<dbReference type="EMBL" id="AE017283">
    <property type="protein sequence ID" value="AAT81782.1"/>
    <property type="molecule type" value="Genomic_DNA"/>
</dbReference>
<dbReference type="RefSeq" id="WP_002515909.1">
    <property type="nucleotide sequence ID" value="NZ_CP025935.1"/>
</dbReference>
<dbReference type="SMR" id="Q6ABP6"/>
<dbReference type="EnsemblBacteria" id="AAT81782">
    <property type="protein sequence ID" value="AAT81782"/>
    <property type="gene ID" value="PPA0019"/>
</dbReference>
<dbReference type="GeneID" id="92856006"/>
<dbReference type="KEGG" id="pac:PPA0019"/>
<dbReference type="PATRIC" id="fig|267747.3.peg.19"/>
<dbReference type="eggNOG" id="COG1869">
    <property type="taxonomic scope" value="Bacteria"/>
</dbReference>
<dbReference type="HOGENOM" id="CLU_135498_0_0_11"/>
<dbReference type="UniPathway" id="UPA00916">
    <property type="reaction ID" value="UER00888"/>
</dbReference>
<dbReference type="Proteomes" id="UP000000603">
    <property type="component" value="Chromosome"/>
</dbReference>
<dbReference type="GO" id="GO:0005829">
    <property type="term" value="C:cytosol"/>
    <property type="evidence" value="ECO:0007669"/>
    <property type="project" value="TreeGrafter"/>
</dbReference>
<dbReference type="GO" id="GO:0062193">
    <property type="term" value="F:D-ribose pyranase activity"/>
    <property type="evidence" value="ECO:0007669"/>
    <property type="project" value="UniProtKB-EC"/>
</dbReference>
<dbReference type="GO" id="GO:0016872">
    <property type="term" value="F:intramolecular lyase activity"/>
    <property type="evidence" value="ECO:0007669"/>
    <property type="project" value="UniProtKB-UniRule"/>
</dbReference>
<dbReference type="GO" id="GO:0048029">
    <property type="term" value="F:monosaccharide binding"/>
    <property type="evidence" value="ECO:0007669"/>
    <property type="project" value="InterPro"/>
</dbReference>
<dbReference type="GO" id="GO:0019303">
    <property type="term" value="P:D-ribose catabolic process"/>
    <property type="evidence" value="ECO:0007669"/>
    <property type="project" value="UniProtKB-UniRule"/>
</dbReference>
<dbReference type="Gene3D" id="3.40.1650.10">
    <property type="entry name" value="RbsD-like domain"/>
    <property type="match status" value="1"/>
</dbReference>
<dbReference type="HAMAP" id="MF_01661">
    <property type="entry name" value="D_rib_pyranase"/>
    <property type="match status" value="1"/>
</dbReference>
<dbReference type="InterPro" id="IPR023064">
    <property type="entry name" value="D-ribose_pyranase"/>
</dbReference>
<dbReference type="InterPro" id="IPR023750">
    <property type="entry name" value="RbsD-like_sf"/>
</dbReference>
<dbReference type="InterPro" id="IPR007721">
    <property type="entry name" value="RbsD_FucU"/>
</dbReference>
<dbReference type="NCBIfam" id="NF008761">
    <property type="entry name" value="PRK11797.1"/>
    <property type="match status" value="1"/>
</dbReference>
<dbReference type="PANTHER" id="PTHR37831">
    <property type="entry name" value="D-RIBOSE PYRANASE"/>
    <property type="match status" value="1"/>
</dbReference>
<dbReference type="PANTHER" id="PTHR37831:SF1">
    <property type="entry name" value="D-RIBOSE PYRANASE"/>
    <property type="match status" value="1"/>
</dbReference>
<dbReference type="Pfam" id="PF05025">
    <property type="entry name" value="RbsD_FucU"/>
    <property type="match status" value="1"/>
</dbReference>
<dbReference type="SUPFAM" id="SSF102546">
    <property type="entry name" value="RbsD-like"/>
    <property type="match status" value="1"/>
</dbReference>
<accession>Q6ABP6</accession>
<organism>
    <name type="scientific">Cutibacterium acnes (strain DSM 16379 / KPA171202)</name>
    <name type="common">Propionibacterium acnes</name>
    <dbReference type="NCBI Taxonomy" id="267747"/>
    <lineage>
        <taxon>Bacteria</taxon>
        <taxon>Bacillati</taxon>
        <taxon>Actinomycetota</taxon>
        <taxon>Actinomycetes</taxon>
        <taxon>Propionibacteriales</taxon>
        <taxon>Propionibacteriaceae</taxon>
        <taxon>Cutibacterium</taxon>
    </lineage>
</organism>
<reference key="1">
    <citation type="journal article" date="2004" name="Science">
        <title>The complete genome sequence of Propionibacterium acnes, a commensal of human skin.</title>
        <authorList>
            <person name="Brueggemann H."/>
            <person name="Henne A."/>
            <person name="Hoster F."/>
            <person name="Liesegang H."/>
            <person name="Wiezer A."/>
            <person name="Strittmatter A."/>
            <person name="Hujer S."/>
            <person name="Duerre P."/>
            <person name="Gottschalk G."/>
        </authorList>
    </citation>
    <scope>NUCLEOTIDE SEQUENCE [LARGE SCALE GENOMIC DNA]</scope>
    <source>
        <strain>DSM 16379 / KPA171202</strain>
    </source>
</reference>
<feature type="chain" id="PRO_0000346233" description="D-ribose pyranase">
    <location>
        <begin position="1"/>
        <end position="127"/>
    </location>
</feature>
<feature type="active site" description="Proton donor" evidence="1">
    <location>
        <position position="20"/>
    </location>
</feature>
<feature type="binding site" evidence="1">
    <location>
        <position position="28"/>
    </location>
    <ligand>
        <name>substrate</name>
    </ligand>
</feature>
<feature type="binding site" evidence="1">
    <location>
        <position position="94"/>
    </location>
    <ligand>
        <name>substrate</name>
    </ligand>
</feature>
<feature type="binding site" evidence="1">
    <location>
        <begin position="116"/>
        <end position="118"/>
    </location>
    <ligand>
        <name>substrate</name>
    </ligand>
</feature>
<comment type="function">
    <text evidence="1">Catalyzes the interconversion of beta-pyran and beta-furan forms of D-ribose.</text>
</comment>
<comment type="catalytic activity">
    <reaction evidence="1">
        <text>beta-D-ribopyranose = beta-D-ribofuranose</text>
        <dbReference type="Rhea" id="RHEA:25432"/>
        <dbReference type="ChEBI" id="CHEBI:27476"/>
        <dbReference type="ChEBI" id="CHEBI:47002"/>
        <dbReference type="EC" id="5.4.99.62"/>
    </reaction>
</comment>
<comment type="pathway">
    <text evidence="1">Carbohydrate metabolism; D-ribose degradation; D-ribose 5-phosphate from beta-D-ribopyranose: step 1/2.</text>
</comment>
<comment type="subunit">
    <text evidence="1">Homodecamer.</text>
</comment>
<comment type="subcellular location">
    <subcellularLocation>
        <location evidence="1">Cytoplasm</location>
    </subcellularLocation>
</comment>
<comment type="similarity">
    <text evidence="1">Belongs to the RbsD / FucU family. RbsD subfamily.</text>
</comment>
<evidence type="ECO:0000255" key="1">
    <source>
        <dbReference type="HAMAP-Rule" id="MF_01661"/>
    </source>
</evidence>
<name>RBSD_CUTAK</name>
<proteinExistence type="inferred from homology"/>
<keyword id="KW-0119">Carbohydrate metabolism</keyword>
<keyword id="KW-0963">Cytoplasm</keyword>
<keyword id="KW-0413">Isomerase</keyword>
<sequence>MKKSGLLNPQLCAAVARLGHTQTFVVADAGLPIPHEVPVIDLAVVLGTPRFQEVFDAILDEVVVDGATIAHEALGHEPESWVRERIEEVHTVSHEDLKKALPNVSFVVRTGETTPYSNVIVRCGVPF</sequence>
<gene>
    <name evidence="1" type="primary">rbsD</name>
    <name type="ordered locus">PPA0019</name>
</gene>
<protein>
    <recommendedName>
        <fullName evidence="1">D-ribose pyranase</fullName>
        <ecNumber evidence="1">5.4.99.62</ecNumber>
    </recommendedName>
</protein>